<accession>A8LKX1</accession>
<gene>
    <name evidence="1" type="primary">metAA</name>
    <name type="ordered locus">Dshi_1593</name>
</gene>
<feature type="chain" id="PRO_1000078931" description="Homoserine O-acetyltransferase">
    <location>
        <begin position="1"/>
        <end position="305"/>
    </location>
</feature>
<feature type="active site" description="Acyl-thioester intermediate" evidence="1">
    <location>
        <position position="142"/>
    </location>
</feature>
<feature type="active site" description="Proton acceptor" evidence="1">
    <location>
        <position position="235"/>
    </location>
</feature>
<feature type="active site" evidence="1">
    <location>
        <position position="237"/>
    </location>
</feature>
<feature type="binding site" evidence="1">
    <location>
        <position position="163"/>
    </location>
    <ligand>
        <name>substrate</name>
    </ligand>
</feature>
<feature type="binding site" evidence="1">
    <location>
        <position position="192"/>
    </location>
    <ligand>
        <name>substrate</name>
    </ligand>
</feature>
<feature type="binding site" evidence="1">
    <location>
        <position position="249"/>
    </location>
    <ligand>
        <name>substrate</name>
    </ligand>
</feature>
<feature type="site" description="Important for acyl-CoA specificity" evidence="1">
    <location>
        <position position="111"/>
    </location>
</feature>
<feature type="site" description="Important for substrate specificity" evidence="1">
    <location>
        <position position="192"/>
    </location>
</feature>
<reference key="1">
    <citation type="journal article" date="2010" name="ISME J.">
        <title>The complete genome sequence of the algal symbiont Dinoroseobacter shibae: a hitchhiker's guide to life in the sea.</title>
        <authorList>
            <person name="Wagner-Dobler I."/>
            <person name="Ballhausen B."/>
            <person name="Berger M."/>
            <person name="Brinkhoff T."/>
            <person name="Buchholz I."/>
            <person name="Bunk B."/>
            <person name="Cypionka H."/>
            <person name="Daniel R."/>
            <person name="Drepper T."/>
            <person name="Gerdts G."/>
            <person name="Hahnke S."/>
            <person name="Han C."/>
            <person name="Jahn D."/>
            <person name="Kalhoefer D."/>
            <person name="Kiss H."/>
            <person name="Klenk H.P."/>
            <person name="Kyrpides N."/>
            <person name="Liebl W."/>
            <person name="Liesegang H."/>
            <person name="Meincke L."/>
            <person name="Pati A."/>
            <person name="Petersen J."/>
            <person name="Piekarski T."/>
            <person name="Pommerenke C."/>
            <person name="Pradella S."/>
            <person name="Pukall R."/>
            <person name="Rabus R."/>
            <person name="Stackebrandt E."/>
            <person name="Thole S."/>
            <person name="Thompson L."/>
            <person name="Tielen P."/>
            <person name="Tomasch J."/>
            <person name="von Jan M."/>
            <person name="Wanphrut N."/>
            <person name="Wichels A."/>
            <person name="Zech H."/>
            <person name="Simon M."/>
        </authorList>
    </citation>
    <scope>NUCLEOTIDE SEQUENCE [LARGE SCALE GENOMIC DNA]</scope>
    <source>
        <strain>DSM 16493 / NCIMB 14021 / DFL 12</strain>
    </source>
</reference>
<organism>
    <name type="scientific">Dinoroseobacter shibae (strain DSM 16493 / NCIMB 14021 / DFL 12)</name>
    <dbReference type="NCBI Taxonomy" id="398580"/>
    <lineage>
        <taxon>Bacteria</taxon>
        <taxon>Pseudomonadati</taxon>
        <taxon>Pseudomonadota</taxon>
        <taxon>Alphaproteobacteria</taxon>
        <taxon>Rhodobacterales</taxon>
        <taxon>Roseobacteraceae</taxon>
        <taxon>Dinoroseobacter</taxon>
    </lineage>
</organism>
<keyword id="KW-0012">Acyltransferase</keyword>
<keyword id="KW-0028">Amino-acid biosynthesis</keyword>
<keyword id="KW-0963">Cytoplasm</keyword>
<keyword id="KW-0486">Methionine biosynthesis</keyword>
<keyword id="KW-1185">Reference proteome</keyword>
<keyword id="KW-0808">Transferase</keyword>
<evidence type="ECO:0000255" key="1">
    <source>
        <dbReference type="HAMAP-Rule" id="MF_00295"/>
    </source>
</evidence>
<comment type="function">
    <text evidence="1">Transfers an acetyl group from acetyl-CoA to L-homoserine, forming acetyl-L-homoserine.</text>
</comment>
<comment type="catalytic activity">
    <reaction evidence="1">
        <text>L-homoserine + acetyl-CoA = O-acetyl-L-homoserine + CoA</text>
        <dbReference type="Rhea" id="RHEA:13701"/>
        <dbReference type="ChEBI" id="CHEBI:57287"/>
        <dbReference type="ChEBI" id="CHEBI:57288"/>
        <dbReference type="ChEBI" id="CHEBI:57476"/>
        <dbReference type="ChEBI" id="CHEBI:57716"/>
        <dbReference type="EC" id="2.3.1.31"/>
    </reaction>
</comment>
<comment type="pathway">
    <text evidence="1">Amino-acid biosynthesis; L-methionine biosynthesis via de novo pathway; O-acetyl-L-homoserine from L-homoserine: step 1/1.</text>
</comment>
<comment type="subcellular location">
    <subcellularLocation>
        <location evidence="1">Cytoplasm</location>
    </subcellularLocation>
</comment>
<comment type="similarity">
    <text evidence="1">Belongs to the MetA family.</text>
</comment>
<proteinExistence type="inferred from homology"/>
<sequence length="305" mass="34710">MPIKIPETLPAFDVLSSEGVMVMGQGRADRQDIRPLQIGLLNLMPKKIQTETQFARLIGATPLQIDLTLIRMTEHQSKHTSAAHMEAFYRPFAEVRDRKFDGLIITGAPIEHLEFADVTYWDELREVFAWTQTNVHATFGVCWGGMAMINHFHGVQKHILPAKAFGCFRHRNLAPASPYLRGFSDDCVIPVSRWTEMKQSEIDAVPGLTTLLGSPEVGPCLVEDPGHRALYIFNHFEYDTGTLKEEYDRDVENGTPINVPTNYYPDDDPARAPLNRWRSHAHLLYGNWLNEIYQTTEYDLEKIGT</sequence>
<dbReference type="EC" id="2.3.1.31" evidence="1"/>
<dbReference type="EMBL" id="CP000830">
    <property type="protein sequence ID" value="ABV93335.1"/>
    <property type="molecule type" value="Genomic_DNA"/>
</dbReference>
<dbReference type="RefSeq" id="WP_012178265.1">
    <property type="nucleotide sequence ID" value="NC_009952.1"/>
</dbReference>
<dbReference type="SMR" id="A8LKX1"/>
<dbReference type="STRING" id="398580.Dshi_1593"/>
<dbReference type="KEGG" id="dsh:Dshi_1593"/>
<dbReference type="eggNOG" id="COG1897">
    <property type="taxonomic scope" value="Bacteria"/>
</dbReference>
<dbReference type="HOGENOM" id="CLU_057851_0_1_5"/>
<dbReference type="OrthoDB" id="9772423at2"/>
<dbReference type="UniPathway" id="UPA00051">
    <property type="reaction ID" value="UER00074"/>
</dbReference>
<dbReference type="Proteomes" id="UP000006833">
    <property type="component" value="Chromosome"/>
</dbReference>
<dbReference type="GO" id="GO:0005737">
    <property type="term" value="C:cytoplasm"/>
    <property type="evidence" value="ECO:0007669"/>
    <property type="project" value="UniProtKB-SubCell"/>
</dbReference>
<dbReference type="GO" id="GO:0004414">
    <property type="term" value="F:homoserine O-acetyltransferase activity"/>
    <property type="evidence" value="ECO:0007669"/>
    <property type="project" value="UniProtKB-EC"/>
</dbReference>
<dbReference type="GO" id="GO:0008899">
    <property type="term" value="F:homoserine O-succinyltransferase activity"/>
    <property type="evidence" value="ECO:0007669"/>
    <property type="project" value="UniProtKB-UniRule"/>
</dbReference>
<dbReference type="GO" id="GO:0019281">
    <property type="term" value="P:L-methionine biosynthetic process from homoserine via O-succinyl-L-homoserine and cystathionine"/>
    <property type="evidence" value="ECO:0007669"/>
    <property type="project" value="InterPro"/>
</dbReference>
<dbReference type="CDD" id="cd03131">
    <property type="entry name" value="GATase1_HTS"/>
    <property type="match status" value="1"/>
</dbReference>
<dbReference type="Gene3D" id="3.40.50.880">
    <property type="match status" value="1"/>
</dbReference>
<dbReference type="HAMAP" id="MF_00295">
    <property type="entry name" value="MetA_acyltransf"/>
    <property type="match status" value="1"/>
</dbReference>
<dbReference type="InterPro" id="IPR029062">
    <property type="entry name" value="Class_I_gatase-like"/>
</dbReference>
<dbReference type="InterPro" id="IPR005697">
    <property type="entry name" value="HST_MetA"/>
</dbReference>
<dbReference type="InterPro" id="IPR033752">
    <property type="entry name" value="MetA_family"/>
</dbReference>
<dbReference type="NCBIfam" id="TIGR01001">
    <property type="entry name" value="metA"/>
    <property type="match status" value="1"/>
</dbReference>
<dbReference type="PANTHER" id="PTHR20919">
    <property type="entry name" value="HOMOSERINE O-SUCCINYLTRANSFERASE"/>
    <property type="match status" value="1"/>
</dbReference>
<dbReference type="PANTHER" id="PTHR20919:SF0">
    <property type="entry name" value="HOMOSERINE O-SUCCINYLTRANSFERASE"/>
    <property type="match status" value="1"/>
</dbReference>
<dbReference type="Pfam" id="PF04204">
    <property type="entry name" value="HTS"/>
    <property type="match status" value="1"/>
</dbReference>
<dbReference type="PIRSF" id="PIRSF000450">
    <property type="entry name" value="H_ser_succinyltr"/>
    <property type="match status" value="1"/>
</dbReference>
<dbReference type="SUPFAM" id="SSF52317">
    <property type="entry name" value="Class I glutamine amidotransferase-like"/>
    <property type="match status" value="1"/>
</dbReference>
<protein>
    <recommendedName>
        <fullName evidence="1">Homoserine O-acetyltransferase</fullName>
        <shortName evidence="1">HAT</shortName>
        <ecNumber evidence="1">2.3.1.31</ecNumber>
    </recommendedName>
    <alternativeName>
        <fullName evidence="1">Homoserine transacetylase</fullName>
        <shortName evidence="1">HTA</shortName>
    </alternativeName>
</protein>
<name>METAA_DINSH</name>